<comment type="function">
    <text evidence="1">Catalyzes the cross-linking of a glutamate residue and a tyrosine residue in the PqqA protein as part of the biosynthesis of pyrroloquinoline quinone (PQQ).</text>
</comment>
<comment type="catalytic activity">
    <reaction evidence="1">
        <text>[PQQ precursor protein] + S-adenosyl-L-methionine = E-Y cross-linked-[PQQ precursor protein] + 5'-deoxyadenosine + L-methionine + H(+)</text>
        <dbReference type="Rhea" id="RHEA:56836"/>
        <dbReference type="Rhea" id="RHEA-COMP:14800"/>
        <dbReference type="Rhea" id="RHEA-COMP:14801"/>
        <dbReference type="ChEBI" id="CHEBI:15378"/>
        <dbReference type="ChEBI" id="CHEBI:17319"/>
        <dbReference type="ChEBI" id="CHEBI:57844"/>
        <dbReference type="ChEBI" id="CHEBI:59789"/>
        <dbReference type="ChEBI" id="CHEBI:141026"/>
        <dbReference type="ChEBI" id="CHEBI:141027"/>
        <dbReference type="EC" id="1.21.98.4"/>
    </reaction>
</comment>
<comment type="cofactor">
    <cofactor evidence="1">
        <name>[4Fe-4S] cluster</name>
        <dbReference type="ChEBI" id="CHEBI:49883"/>
    </cofactor>
    <text evidence="1">Binds 1 [4Fe-4S] cluster. The cluster is coordinated with 3 cysteines and an exchangeable S-adenosyl-L-methionine.</text>
</comment>
<comment type="pathway">
    <text evidence="1">Cofactor biosynthesis; pyrroloquinoline quinone biosynthesis.</text>
</comment>
<comment type="subunit">
    <text evidence="1">Interacts with PqqD. The interaction is necessary for activity of PqqE.</text>
</comment>
<comment type="similarity">
    <text evidence="1">Belongs to the radical SAM superfamily. PqqE family.</text>
</comment>
<organism>
    <name type="scientific">Acinetobacter baumannii (strain ACICU)</name>
    <dbReference type="NCBI Taxonomy" id="405416"/>
    <lineage>
        <taxon>Bacteria</taxon>
        <taxon>Pseudomonadati</taxon>
        <taxon>Pseudomonadota</taxon>
        <taxon>Gammaproteobacteria</taxon>
        <taxon>Moraxellales</taxon>
        <taxon>Moraxellaceae</taxon>
        <taxon>Acinetobacter</taxon>
        <taxon>Acinetobacter calcoaceticus/baumannii complex</taxon>
    </lineage>
</organism>
<evidence type="ECO:0000255" key="1">
    <source>
        <dbReference type="HAMAP-Rule" id="MF_00660"/>
    </source>
</evidence>
<evidence type="ECO:0000255" key="2">
    <source>
        <dbReference type="PROSITE-ProRule" id="PRU01266"/>
    </source>
</evidence>
<protein>
    <recommendedName>
        <fullName evidence="1">PqqA peptide cyclase</fullName>
        <ecNumber evidence="1">1.21.98.4</ecNumber>
    </recommendedName>
    <alternativeName>
        <fullName evidence="1">Coenzyme PQQ synthesis protein E</fullName>
    </alternativeName>
    <alternativeName>
        <fullName evidence="1">Pyrroloquinoline quinone biosynthesis protein E</fullName>
    </alternativeName>
</protein>
<proteinExistence type="inferred from homology"/>
<reference key="1">
    <citation type="journal article" date="2008" name="Antimicrob. Agents Chemother.">
        <title>Whole-genome pyrosequencing of an epidemic multidrug-resistant Acinetobacter baumannii strain belonging to the European clone II group.</title>
        <authorList>
            <person name="Iacono M."/>
            <person name="Villa L."/>
            <person name="Fortini D."/>
            <person name="Bordoni R."/>
            <person name="Imperi F."/>
            <person name="Bonnal R.J."/>
            <person name="Sicheritz-Ponten T."/>
            <person name="De Bellis G."/>
            <person name="Visca P."/>
            <person name="Cassone A."/>
            <person name="Carattoli A."/>
        </authorList>
    </citation>
    <scope>NUCLEOTIDE SEQUENCE [LARGE SCALE GENOMIC DNA]</scope>
    <source>
        <strain>ACICU</strain>
    </source>
</reference>
<feature type="chain" id="PRO_1000131272" description="PqqA peptide cyclase">
    <location>
        <begin position="1"/>
        <end position="384"/>
    </location>
</feature>
<feature type="domain" description="Radical SAM core" evidence="2">
    <location>
        <begin position="5"/>
        <end position="220"/>
    </location>
</feature>
<feature type="binding site" evidence="1">
    <location>
        <position position="19"/>
    </location>
    <ligand>
        <name>[4Fe-4S] cluster</name>
        <dbReference type="ChEBI" id="CHEBI:49883"/>
        <note>4Fe-4S-S-AdoMet</note>
    </ligand>
</feature>
<feature type="binding site" evidence="1">
    <location>
        <position position="23"/>
    </location>
    <ligand>
        <name>[4Fe-4S] cluster</name>
        <dbReference type="ChEBI" id="CHEBI:49883"/>
        <note>4Fe-4S-S-AdoMet</note>
    </ligand>
</feature>
<feature type="binding site" evidence="1">
    <location>
        <position position="26"/>
    </location>
    <ligand>
        <name>[4Fe-4S] cluster</name>
        <dbReference type="ChEBI" id="CHEBI:49883"/>
        <note>4Fe-4S-S-AdoMet</note>
    </ligand>
</feature>
<keyword id="KW-0004">4Fe-4S</keyword>
<keyword id="KW-0408">Iron</keyword>
<keyword id="KW-0411">Iron-sulfur</keyword>
<keyword id="KW-0479">Metal-binding</keyword>
<keyword id="KW-0560">Oxidoreductase</keyword>
<keyword id="KW-0884">PQQ biosynthesis</keyword>
<keyword id="KW-0949">S-adenosyl-L-methionine</keyword>
<sequence>MTEGVGLPLWLLAELTYRCPLQCPYCSNPLDYAQHKNELTTQEWFDVFDQARQMGAVQLGFSGGEPLVRQDLEQLVAHAHQLGFYTNLITSGMGLTEQRISHLKQAGLDHIQISFQASDPVVNDALAGSKHAFEQKYEMCRLVKKYDYPMVLNFVIHRHNIDQIDKIIELCLELNADTVELAICQFYGWAFLNRQGLLPTQEQLIRAERITNEYREKLKAQNHPCKLIFVVPDYYEERPKACMNGWGKIFFTIAPDGMALPCHAARQLPISFPNVREQSLSKIWYESTGFNHFRGDAWMPEGCRSCPDKDRDFGGCRCQAYMLTGDASNADPVCGKSLYHQLIEQARAESEIDSSLGKLVFRNSRNSKQFTVQQNIPVQNIVDD</sequence>
<gene>
    <name evidence="1" type="primary">pqqE</name>
    <name type="ordered locus">ACICU_01798</name>
</gene>
<name>PQQE_ACIBC</name>
<dbReference type="EC" id="1.21.98.4" evidence="1"/>
<dbReference type="EMBL" id="CP000863">
    <property type="protein sequence ID" value="ACC57110.1"/>
    <property type="molecule type" value="Genomic_DNA"/>
</dbReference>
<dbReference type="RefSeq" id="WP_000134715.1">
    <property type="nucleotide sequence ID" value="NZ_CP031380.1"/>
</dbReference>
<dbReference type="SMR" id="B2I0I5"/>
<dbReference type="KEGG" id="abc:ACICU_01798"/>
<dbReference type="HOGENOM" id="CLU_009273_4_7_6"/>
<dbReference type="UniPathway" id="UPA00539"/>
<dbReference type="Proteomes" id="UP000008839">
    <property type="component" value="Chromosome"/>
</dbReference>
<dbReference type="GO" id="GO:0051539">
    <property type="term" value="F:4 iron, 4 sulfur cluster binding"/>
    <property type="evidence" value="ECO:0007669"/>
    <property type="project" value="UniProtKB-KW"/>
</dbReference>
<dbReference type="GO" id="GO:0009975">
    <property type="term" value="F:cyclase activity"/>
    <property type="evidence" value="ECO:0007669"/>
    <property type="project" value="UniProtKB-UniRule"/>
</dbReference>
<dbReference type="GO" id="GO:0005506">
    <property type="term" value="F:iron ion binding"/>
    <property type="evidence" value="ECO:0007669"/>
    <property type="project" value="UniProtKB-UniRule"/>
</dbReference>
<dbReference type="GO" id="GO:0016491">
    <property type="term" value="F:oxidoreductase activity"/>
    <property type="evidence" value="ECO:0007669"/>
    <property type="project" value="UniProtKB-KW"/>
</dbReference>
<dbReference type="GO" id="GO:1904047">
    <property type="term" value="F:S-adenosyl-L-methionine binding"/>
    <property type="evidence" value="ECO:0007669"/>
    <property type="project" value="UniProtKB-UniRule"/>
</dbReference>
<dbReference type="GO" id="GO:0018189">
    <property type="term" value="P:pyrroloquinoline quinone biosynthetic process"/>
    <property type="evidence" value="ECO:0007669"/>
    <property type="project" value="UniProtKB-UniRule"/>
</dbReference>
<dbReference type="CDD" id="cd01335">
    <property type="entry name" value="Radical_SAM"/>
    <property type="match status" value="1"/>
</dbReference>
<dbReference type="CDD" id="cd21119">
    <property type="entry name" value="SPASM_PqqE"/>
    <property type="match status" value="1"/>
</dbReference>
<dbReference type="Gene3D" id="3.20.20.70">
    <property type="entry name" value="Aldolase class I"/>
    <property type="match status" value="1"/>
</dbReference>
<dbReference type="HAMAP" id="MF_00660">
    <property type="entry name" value="PqqE"/>
    <property type="match status" value="1"/>
</dbReference>
<dbReference type="InterPro" id="IPR023885">
    <property type="entry name" value="4Fe4S-binding_SPASM_dom"/>
</dbReference>
<dbReference type="InterPro" id="IPR013785">
    <property type="entry name" value="Aldolase_TIM"/>
</dbReference>
<dbReference type="InterPro" id="IPR006638">
    <property type="entry name" value="Elp3/MiaA/NifB-like_rSAM"/>
</dbReference>
<dbReference type="InterPro" id="IPR000385">
    <property type="entry name" value="MoaA_NifB_PqqE_Fe-S-bd_CS"/>
</dbReference>
<dbReference type="InterPro" id="IPR011843">
    <property type="entry name" value="PQQ_synth_PqqE_bac"/>
</dbReference>
<dbReference type="InterPro" id="IPR017200">
    <property type="entry name" value="PqqE-like"/>
</dbReference>
<dbReference type="InterPro" id="IPR050377">
    <property type="entry name" value="Radical_SAM_PqqE_MftC-like"/>
</dbReference>
<dbReference type="InterPro" id="IPR007197">
    <property type="entry name" value="rSAM"/>
</dbReference>
<dbReference type="NCBIfam" id="TIGR02109">
    <property type="entry name" value="PQQ_syn_pqqE"/>
    <property type="match status" value="1"/>
</dbReference>
<dbReference type="NCBIfam" id="TIGR04085">
    <property type="entry name" value="rSAM_more_4Fe4S"/>
    <property type="match status" value="1"/>
</dbReference>
<dbReference type="PANTHER" id="PTHR11228:SF7">
    <property type="entry name" value="PQQA PEPTIDE CYCLASE"/>
    <property type="match status" value="1"/>
</dbReference>
<dbReference type="PANTHER" id="PTHR11228">
    <property type="entry name" value="RADICAL SAM DOMAIN PROTEIN"/>
    <property type="match status" value="1"/>
</dbReference>
<dbReference type="Pfam" id="PF13353">
    <property type="entry name" value="Fer4_12"/>
    <property type="match status" value="1"/>
</dbReference>
<dbReference type="Pfam" id="PF04055">
    <property type="entry name" value="Radical_SAM"/>
    <property type="match status" value="1"/>
</dbReference>
<dbReference type="Pfam" id="PF13186">
    <property type="entry name" value="SPASM"/>
    <property type="match status" value="1"/>
</dbReference>
<dbReference type="PIRSF" id="PIRSF037420">
    <property type="entry name" value="PQQ_syn_pqqE"/>
    <property type="match status" value="1"/>
</dbReference>
<dbReference type="SFLD" id="SFLDF00280">
    <property type="entry name" value="coenzyme_PQQ_synthesis_protein"/>
    <property type="match status" value="1"/>
</dbReference>
<dbReference type="SFLD" id="SFLDS00029">
    <property type="entry name" value="Radical_SAM"/>
    <property type="match status" value="1"/>
</dbReference>
<dbReference type="SMART" id="SM00729">
    <property type="entry name" value="Elp3"/>
    <property type="match status" value="1"/>
</dbReference>
<dbReference type="SUPFAM" id="SSF102114">
    <property type="entry name" value="Radical SAM enzymes"/>
    <property type="match status" value="1"/>
</dbReference>
<dbReference type="PROSITE" id="PS01305">
    <property type="entry name" value="MOAA_NIFB_PQQE"/>
    <property type="match status" value="1"/>
</dbReference>
<dbReference type="PROSITE" id="PS51918">
    <property type="entry name" value="RADICAL_SAM"/>
    <property type="match status" value="1"/>
</dbReference>
<accession>B2I0I5</accession>